<dbReference type="EC" id="2.1.3.3" evidence="5"/>
<dbReference type="EMBL" id="Y10266">
    <property type="protein sequence ID" value="CAA71315.1"/>
    <property type="molecule type" value="Genomic_DNA"/>
</dbReference>
<dbReference type="EMBL" id="Y18353">
    <property type="protein sequence ID" value="CAA77140.1"/>
    <property type="molecule type" value="Genomic_DNA"/>
</dbReference>
<dbReference type="EMBL" id="AE017221">
    <property type="protein sequence ID" value="AAS81184.1"/>
    <property type="molecule type" value="Genomic_DNA"/>
</dbReference>
<dbReference type="RefSeq" id="WP_011173269.1">
    <property type="nucleotide sequence ID" value="NC_005835.1"/>
</dbReference>
<dbReference type="SMR" id="P96134"/>
<dbReference type="KEGG" id="tth:TT_C0838"/>
<dbReference type="eggNOG" id="COG0078">
    <property type="taxonomic scope" value="Bacteria"/>
</dbReference>
<dbReference type="HOGENOM" id="CLU_043846_3_2_0"/>
<dbReference type="OrthoDB" id="9802587at2"/>
<dbReference type="SABIO-RK" id="P96134"/>
<dbReference type="UniPathway" id="UPA00068">
    <property type="reaction ID" value="UER00112"/>
</dbReference>
<dbReference type="Proteomes" id="UP000000592">
    <property type="component" value="Chromosome"/>
</dbReference>
<dbReference type="GO" id="GO:0005737">
    <property type="term" value="C:cytoplasm"/>
    <property type="evidence" value="ECO:0007669"/>
    <property type="project" value="UniProtKB-SubCell"/>
</dbReference>
<dbReference type="GO" id="GO:0016597">
    <property type="term" value="F:amino acid binding"/>
    <property type="evidence" value="ECO:0007669"/>
    <property type="project" value="InterPro"/>
</dbReference>
<dbReference type="GO" id="GO:0004585">
    <property type="term" value="F:ornithine carbamoyltransferase activity"/>
    <property type="evidence" value="ECO:0007669"/>
    <property type="project" value="UniProtKB-UniRule"/>
</dbReference>
<dbReference type="GO" id="GO:0042450">
    <property type="term" value="P:arginine biosynthetic process via ornithine"/>
    <property type="evidence" value="ECO:0007669"/>
    <property type="project" value="TreeGrafter"/>
</dbReference>
<dbReference type="GO" id="GO:0019240">
    <property type="term" value="P:citrulline biosynthetic process"/>
    <property type="evidence" value="ECO:0007669"/>
    <property type="project" value="TreeGrafter"/>
</dbReference>
<dbReference type="GO" id="GO:0006526">
    <property type="term" value="P:L-arginine biosynthetic process"/>
    <property type="evidence" value="ECO:0007669"/>
    <property type="project" value="UniProtKB-UniRule"/>
</dbReference>
<dbReference type="FunFam" id="3.40.50.1370:FF:000008">
    <property type="entry name" value="Ornithine carbamoyltransferase"/>
    <property type="match status" value="1"/>
</dbReference>
<dbReference type="Gene3D" id="3.40.50.1370">
    <property type="entry name" value="Aspartate/ornithine carbamoyltransferase"/>
    <property type="match status" value="2"/>
</dbReference>
<dbReference type="HAMAP" id="MF_01109">
    <property type="entry name" value="OTCase"/>
    <property type="match status" value="1"/>
</dbReference>
<dbReference type="InterPro" id="IPR006132">
    <property type="entry name" value="Asp/Orn_carbamoyltranf_P-bd"/>
</dbReference>
<dbReference type="InterPro" id="IPR006130">
    <property type="entry name" value="Asp/Orn_carbamoylTrfase"/>
</dbReference>
<dbReference type="InterPro" id="IPR036901">
    <property type="entry name" value="Asp/Orn_carbamoylTrfase_sf"/>
</dbReference>
<dbReference type="InterPro" id="IPR006131">
    <property type="entry name" value="Asp_carbamoyltransf_Asp/Orn-bd"/>
</dbReference>
<dbReference type="InterPro" id="IPR002292">
    <property type="entry name" value="Orn/put_carbamltrans"/>
</dbReference>
<dbReference type="InterPro" id="IPR024904">
    <property type="entry name" value="OTCase_ArgI"/>
</dbReference>
<dbReference type="NCBIfam" id="TIGR00658">
    <property type="entry name" value="orni_carb_tr"/>
    <property type="match status" value="1"/>
</dbReference>
<dbReference type="NCBIfam" id="NF001986">
    <property type="entry name" value="PRK00779.1"/>
    <property type="match status" value="1"/>
</dbReference>
<dbReference type="PANTHER" id="PTHR45753">
    <property type="entry name" value="ORNITHINE CARBAMOYLTRANSFERASE, MITOCHONDRIAL"/>
    <property type="match status" value="1"/>
</dbReference>
<dbReference type="PANTHER" id="PTHR45753:SF3">
    <property type="entry name" value="ORNITHINE TRANSCARBAMYLASE, MITOCHONDRIAL"/>
    <property type="match status" value="1"/>
</dbReference>
<dbReference type="Pfam" id="PF00185">
    <property type="entry name" value="OTCace"/>
    <property type="match status" value="1"/>
</dbReference>
<dbReference type="Pfam" id="PF02729">
    <property type="entry name" value="OTCace_N"/>
    <property type="match status" value="1"/>
</dbReference>
<dbReference type="PRINTS" id="PR00100">
    <property type="entry name" value="AOTCASE"/>
</dbReference>
<dbReference type="PRINTS" id="PR00102">
    <property type="entry name" value="OTCASE"/>
</dbReference>
<dbReference type="SUPFAM" id="SSF53671">
    <property type="entry name" value="Aspartate/ornithine carbamoyltransferase"/>
    <property type="match status" value="1"/>
</dbReference>
<proteinExistence type="evidence at protein level"/>
<organism>
    <name type="scientific">Thermus thermophilus (strain ATCC BAA-163 / DSM 7039 / HB27)</name>
    <dbReference type="NCBI Taxonomy" id="262724"/>
    <lineage>
        <taxon>Bacteria</taxon>
        <taxon>Thermotogati</taxon>
        <taxon>Deinococcota</taxon>
        <taxon>Deinococci</taxon>
        <taxon>Thermales</taxon>
        <taxon>Thermaceae</taxon>
        <taxon>Thermus</taxon>
    </lineage>
</organism>
<evidence type="ECO:0000255" key="1">
    <source>
        <dbReference type="HAMAP-Rule" id="MF_01109"/>
    </source>
</evidence>
<evidence type="ECO:0000269" key="2">
    <source>
    </source>
</evidence>
<evidence type="ECO:0000303" key="3">
    <source>
    </source>
</evidence>
<evidence type="ECO:0000305" key="4"/>
<evidence type="ECO:0000305" key="5">
    <source>
    </source>
</evidence>
<name>OTC_THET2</name>
<feature type="chain" id="PRO_0000113050" description="Ornithine carbamoyltransferase">
    <location>
        <begin position="1"/>
        <end position="301"/>
    </location>
</feature>
<feature type="binding site" evidence="1">
    <location>
        <position position="107"/>
    </location>
    <ligand>
        <name>carbamoyl phosphate</name>
        <dbReference type="ChEBI" id="CHEBI:58228"/>
    </ligand>
</feature>
<feature type="binding site" evidence="1">
    <location>
        <begin position="134"/>
        <end position="137"/>
    </location>
    <ligand>
        <name>carbamoyl phosphate</name>
        <dbReference type="ChEBI" id="CHEBI:58228"/>
    </ligand>
</feature>
<feature type="binding site" evidence="1">
    <location>
        <position position="165"/>
    </location>
    <ligand>
        <name>L-ornithine</name>
        <dbReference type="ChEBI" id="CHEBI:46911"/>
    </ligand>
</feature>
<feature type="binding site" evidence="1">
    <location>
        <position position="220"/>
    </location>
    <ligand>
        <name>L-ornithine</name>
        <dbReference type="ChEBI" id="CHEBI:46911"/>
    </ligand>
</feature>
<feature type="binding site" evidence="1">
    <location>
        <begin position="224"/>
        <end position="225"/>
    </location>
    <ligand>
        <name>L-ornithine</name>
        <dbReference type="ChEBI" id="CHEBI:46911"/>
    </ligand>
</feature>
<feature type="binding site" evidence="1">
    <location>
        <begin position="260"/>
        <end position="261"/>
    </location>
    <ligand>
        <name>carbamoyl phosphate</name>
        <dbReference type="ChEBI" id="CHEBI:58228"/>
    </ligand>
</feature>
<feature type="binding site" evidence="1">
    <location>
        <position position="288"/>
    </location>
    <ligand>
        <name>carbamoyl phosphate</name>
        <dbReference type="ChEBI" id="CHEBI:58228"/>
    </ligand>
</feature>
<sequence>MGGEALTLPKDLLDFSGYGPKELQALLDLAERLKRERYRGEDLKGKVLALLFEKPSLRTRTTLEVAMVHLGGHAVYLDQKQVGIGEREPVRDVAKNLERFVEGIAARVFRHETVEALARHAKVPVVNALSDRAHPLQALADLLTLKEVFGGLAGLEVAWVGDGNNVLNSLLEVAPLAGLKVRVATPKGYEPDPGLLKRANAFFTHDPKEAALGAHALYTDVWTSMGQEAERAKRLRDFQGFQVNGELLKLLRPEGVFLHCLPAHYGEETTEEAVHGPRSRVFDQAENRLHTAKAVLLTLLK</sequence>
<comment type="function">
    <text evidence="2">Reversibly catalyzes the transfer of the carbamoyl group from carbamoyl phosphate (CP) to the N(epsilon) atom of ornithine (ORN) to produce L-citrulline, which is a substrate for argininosuccinate synthetase, the enzyme involved in the final step in arginine biosynthesis.</text>
</comment>
<comment type="catalytic activity">
    <reaction evidence="5">
        <text>carbamoyl phosphate + L-ornithine = L-citrulline + phosphate + H(+)</text>
        <dbReference type="Rhea" id="RHEA:19513"/>
        <dbReference type="ChEBI" id="CHEBI:15378"/>
        <dbReference type="ChEBI" id="CHEBI:43474"/>
        <dbReference type="ChEBI" id="CHEBI:46911"/>
        <dbReference type="ChEBI" id="CHEBI:57743"/>
        <dbReference type="ChEBI" id="CHEBI:58228"/>
        <dbReference type="EC" id="2.1.3.3"/>
    </reaction>
</comment>
<comment type="activity regulation">
    <text evidence="2">Inhibited by delta-N-phosphonoacetyl-L-ornithine.</text>
</comment>
<comment type="biophysicochemical properties">
    <kinetics>
        <KM evidence="2">0.1 mM for carbamoyl phosphate (at pH 7)</KM>
        <KM evidence="2">0.1 mM for L-ornithine (at pH 7)</KM>
    </kinetics>
    <phDependence>
        <text evidence="2">Optimum pH is dependent on ornithine concentration with an optimum at pH 8 for ornithine concentrations around KM values. Higher concentrations shift the optimum towards lower pH. At pH 7.0, the maximum velocity remains constant even when the ornithine concentration is very high (&gt; 10 mM). At more alkaline pH, however, substrate inhibition is observed above 0.25 mM ornithine.</text>
    </phDependence>
    <temperatureDependence>
        <text evidence="2">Optimum temperature is 65 degrees Celsius. Highly thermostable.</text>
    </temperatureDependence>
</comment>
<comment type="pathway">
    <text>Amino-acid biosynthesis; L-arginine biosynthesis; L-arginine from L-ornithine and carbamoyl phosphate: step 1/3.</text>
</comment>
<comment type="subunit">
    <text evidence="2">Homotrimer.</text>
</comment>
<comment type="subcellular location">
    <subcellularLocation>
        <location evidence="4">Cytoplasm</location>
    </subcellularLocation>
</comment>
<comment type="similarity">
    <text evidence="4">Belongs to the aspartate/ornithine carbamoyltransferase superfamily. OTCase family.</text>
</comment>
<comment type="caution">
    <text evidence="4">Lacks the conserved threonine residue in position 57, which is part of the carbamoylphosphate binding site; it is replaced by a leucine residue (PMIS:9346304).</text>
</comment>
<gene>
    <name evidence="3" type="primary">argF</name>
    <name type="ordered locus">TT_C0838</name>
</gene>
<keyword id="KW-0028">Amino-acid biosynthesis</keyword>
<keyword id="KW-0055">Arginine biosynthesis</keyword>
<keyword id="KW-0963">Cytoplasm</keyword>
<keyword id="KW-0808">Transferase</keyword>
<protein>
    <recommendedName>
        <fullName evidence="3">Ornithine carbamoyltransferase</fullName>
        <shortName evidence="3">OTC</shortName>
        <shortName evidence="3">OTCase</shortName>
        <ecNumber evidence="5">2.1.3.3</ecNumber>
    </recommendedName>
</protein>
<accession>P96134</accession>
<reference key="1">
    <citation type="journal article" date="1997" name="Eur. J. Biochem.">
        <title>Ornithine carbamoyltransferase from the extreme thermophile Thermus thermophilus -- analysis of the gene and characterisation of the protein.</title>
        <authorList>
            <person name="Sanchez R."/>
            <person name="Baetens M."/>
            <person name="van de Casteele M."/>
            <person name="Roovers M."/>
            <person name="Legrain C."/>
            <person name="Glansdorff N."/>
        </authorList>
    </citation>
    <scope>NUCLEOTIDE SEQUENCE [GENOMIC DNA]</scope>
    <scope>FUNCTION AS AN OTCASE</scope>
    <scope>CATALYTIC ACTIVITY</scope>
    <scope>ACTIVITY REGULATION</scope>
    <scope>BIOPHYSICOCHEMICAL PROPERTIES</scope>
    <scope>SUBUNIT</scope>
</reference>
<reference key="2">
    <citation type="submission" date="1998-11" db="EMBL/GenBank/DDBJ databases">
        <title>Organisation of arginine biosynthetic genes in Thermus thermophilus.</title>
        <authorList>
            <person name="Sanchez R."/>
            <person name="Roovers M."/>
            <person name="Glansdorff N."/>
        </authorList>
    </citation>
    <scope>NUCLEOTIDE SEQUENCE [GENOMIC DNA]</scope>
</reference>
<reference key="3">
    <citation type="journal article" date="2004" name="Nat. Biotechnol.">
        <title>The genome sequence of the extreme thermophile Thermus thermophilus.</title>
        <authorList>
            <person name="Henne A."/>
            <person name="Brueggemann H."/>
            <person name="Raasch C."/>
            <person name="Wiezer A."/>
            <person name="Hartsch T."/>
            <person name="Liesegang H."/>
            <person name="Johann A."/>
            <person name="Lienard T."/>
            <person name="Gohl O."/>
            <person name="Martinez-Arias R."/>
            <person name="Jacobi C."/>
            <person name="Starkuviene V."/>
            <person name="Schlenczeck S."/>
            <person name="Dencker S."/>
            <person name="Huber R."/>
            <person name="Klenk H.-P."/>
            <person name="Kramer W."/>
            <person name="Merkl R."/>
            <person name="Gottschalk G."/>
            <person name="Fritz H.-J."/>
        </authorList>
    </citation>
    <scope>NUCLEOTIDE SEQUENCE [LARGE SCALE GENOMIC DNA]</scope>
    <source>
        <strain>ATCC BAA-163 / DSM 7039 / HB27</strain>
    </source>
</reference>